<protein>
    <recommendedName>
        <fullName evidence="1">Glutamyl-tRNA reductase</fullName>
        <shortName evidence="1">GluTR</shortName>
        <ecNumber evidence="1">1.2.1.70</ecNumber>
    </recommendedName>
</protein>
<sequence length="382" mass="43554">MLVVRADYKKYPVPVLEKMRIDEDEFYNKYDACVVVQTCNRIEAYFDTEINSNVDGILKDFQGFDVLKGKNATFHFLKVSCGMDSMILGENQILGQIKTSFQKARELKKTSRYLDSLFLKAIHVGQRARTETKINEGGVSIGSAAVELAEKNFGLANRNVLLIGAGEMGTLVAKALIEKHIKAVIVANRTYERAETLAKELKGMAVHFDKLKEAINFSDVIICATSSPHHILEKKDLIDVGNKIIIDIANPRDVDDSVRELENIELYAIDDLRHISDKNLQSRIEEIPAVEKIIDEEYEVLMKQIEKINVEEVLKEFNNYIEEIRVKELEKAIKLSKTKNPEEIMENFSKAFAKRITHDFVSYSINTSKEDLMNSAWWKNGK</sequence>
<comment type="function">
    <text evidence="1">Catalyzes the NADPH-dependent reduction of glutamyl-tRNA(Glu) to glutamate 1-semialdehyde (GSA).</text>
</comment>
<comment type="catalytic activity">
    <reaction evidence="1">
        <text>(S)-4-amino-5-oxopentanoate + tRNA(Glu) + NADP(+) = L-glutamyl-tRNA(Glu) + NADPH + H(+)</text>
        <dbReference type="Rhea" id="RHEA:12344"/>
        <dbReference type="Rhea" id="RHEA-COMP:9663"/>
        <dbReference type="Rhea" id="RHEA-COMP:9680"/>
        <dbReference type="ChEBI" id="CHEBI:15378"/>
        <dbReference type="ChEBI" id="CHEBI:57501"/>
        <dbReference type="ChEBI" id="CHEBI:57783"/>
        <dbReference type="ChEBI" id="CHEBI:58349"/>
        <dbReference type="ChEBI" id="CHEBI:78442"/>
        <dbReference type="ChEBI" id="CHEBI:78520"/>
        <dbReference type="EC" id="1.2.1.70"/>
    </reaction>
</comment>
<comment type="pathway">
    <text evidence="1">Porphyrin-containing compound metabolism; protoporphyrin-IX biosynthesis; 5-aminolevulinate from L-glutamyl-tRNA(Glu): step 1/2.</text>
</comment>
<comment type="subunit">
    <text evidence="1">Homodimer.</text>
</comment>
<comment type="domain">
    <text evidence="1">Possesses an unusual extended V-shaped dimeric structure with each monomer consisting of three distinct domains arranged along a curved 'spinal' alpha-helix. The N-terminal catalytic domain specifically recognizes the glutamate moiety of the substrate. The second domain is the NADPH-binding domain, and the third C-terminal domain is responsible for dimerization.</text>
</comment>
<comment type="miscellaneous">
    <text evidence="1">During catalysis, the active site Cys acts as a nucleophile attacking the alpha-carbonyl group of tRNA-bound glutamate with the formation of a thioester intermediate between enzyme and glutamate, and the concomitant release of tRNA(Glu). The thioester intermediate is finally reduced by direct hydride transfer from NADPH, to form the product GSA.</text>
</comment>
<comment type="similarity">
    <text evidence="1">Belongs to the glutamyl-tRNA reductase family.</text>
</comment>
<proteinExistence type="inferred from homology"/>
<reference key="1">
    <citation type="submission" date="2007-03" db="EMBL/GenBank/DDBJ databases">
        <title>Complete sequence of chromosome of Methanococcus maripaludis C5.</title>
        <authorList>
            <consortium name="US DOE Joint Genome Institute"/>
            <person name="Copeland A."/>
            <person name="Lucas S."/>
            <person name="Lapidus A."/>
            <person name="Barry K."/>
            <person name="Glavina del Rio T."/>
            <person name="Dalin E."/>
            <person name="Tice H."/>
            <person name="Pitluck S."/>
            <person name="Chertkov O."/>
            <person name="Brettin T."/>
            <person name="Bruce D."/>
            <person name="Han C."/>
            <person name="Detter J.C."/>
            <person name="Schmutz J."/>
            <person name="Larimer F."/>
            <person name="Land M."/>
            <person name="Hauser L."/>
            <person name="Kyrpides N."/>
            <person name="Mikhailova N."/>
            <person name="Sieprawska-Lupa M."/>
            <person name="Whitman W.B."/>
            <person name="Richardson P."/>
        </authorList>
    </citation>
    <scope>NUCLEOTIDE SEQUENCE [LARGE SCALE GENOMIC DNA]</scope>
    <source>
        <strain>C5 / ATCC BAA-1333</strain>
    </source>
</reference>
<keyword id="KW-0521">NADP</keyword>
<keyword id="KW-0560">Oxidoreductase</keyword>
<keyword id="KW-0627">Porphyrin biosynthesis</keyword>
<name>HEM1_METM5</name>
<dbReference type="EC" id="1.2.1.70" evidence="1"/>
<dbReference type="EMBL" id="CP000609">
    <property type="protein sequence ID" value="ABO35885.1"/>
    <property type="molecule type" value="Genomic_DNA"/>
</dbReference>
<dbReference type="RefSeq" id="WP_011869332.1">
    <property type="nucleotide sequence ID" value="NC_009135.1"/>
</dbReference>
<dbReference type="SMR" id="A4G0A1"/>
<dbReference type="STRING" id="402880.MmarC5_1588"/>
<dbReference type="GeneID" id="4929215"/>
<dbReference type="KEGG" id="mmq:MmarC5_1588"/>
<dbReference type="eggNOG" id="arCOG01036">
    <property type="taxonomic scope" value="Archaea"/>
</dbReference>
<dbReference type="HOGENOM" id="CLU_035113_0_0_2"/>
<dbReference type="OrthoDB" id="4562at2157"/>
<dbReference type="UniPathway" id="UPA00251">
    <property type="reaction ID" value="UER00316"/>
</dbReference>
<dbReference type="Proteomes" id="UP000000253">
    <property type="component" value="Chromosome"/>
</dbReference>
<dbReference type="GO" id="GO:0008883">
    <property type="term" value="F:glutamyl-tRNA reductase activity"/>
    <property type="evidence" value="ECO:0007669"/>
    <property type="project" value="UniProtKB-UniRule"/>
</dbReference>
<dbReference type="GO" id="GO:0050661">
    <property type="term" value="F:NADP binding"/>
    <property type="evidence" value="ECO:0007669"/>
    <property type="project" value="InterPro"/>
</dbReference>
<dbReference type="GO" id="GO:0019353">
    <property type="term" value="P:protoporphyrinogen IX biosynthetic process from glutamate"/>
    <property type="evidence" value="ECO:0007669"/>
    <property type="project" value="TreeGrafter"/>
</dbReference>
<dbReference type="CDD" id="cd05213">
    <property type="entry name" value="NAD_bind_Glutamyl_tRNA_reduct"/>
    <property type="match status" value="1"/>
</dbReference>
<dbReference type="FunFam" id="3.40.50.720:FF:000031">
    <property type="entry name" value="Glutamyl-tRNA reductase"/>
    <property type="match status" value="1"/>
</dbReference>
<dbReference type="Gene3D" id="1.10.1200.70">
    <property type="entry name" value="Glutamyl tRNA-reductase dimerization domain"/>
    <property type="match status" value="1"/>
</dbReference>
<dbReference type="Gene3D" id="3.30.460.30">
    <property type="entry name" value="Glutamyl-tRNA reductase, N-terminal domain"/>
    <property type="match status" value="1"/>
</dbReference>
<dbReference type="Gene3D" id="3.40.50.720">
    <property type="entry name" value="NAD(P)-binding Rossmann-like Domain"/>
    <property type="match status" value="1"/>
</dbReference>
<dbReference type="HAMAP" id="MF_00087">
    <property type="entry name" value="Glu_tRNA_reductase"/>
    <property type="match status" value="1"/>
</dbReference>
<dbReference type="InterPro" id="IPR000343">
    <property type="entry name" value="4pyrrol_synth_GluRdtase"/>
</dbReference>
<dbReference type="InterPro" id="IPR015896">
    <property type="entry name" value="4pyrrol_synth_GluRdtase_dimer"/>
</dbReference>
<dbReference type="InterPro" id="IPR015895">
    <property type="entry name" value="4pyrrol_synth_GluRdtase_N"/>
</dbReference>
<dbReference type="InterPro" id="IPR018214">
    <property type="entry name" value="GluRdtase_CS"/>
</dbReference>
<dbReference type="InterPro" id="IPR036453">
    <property type="entry name" value="GluRdtase_dimer_dom_sf"/>
</dbReference>
<dbReference type="InterPro" id="IPR036343">
    <property type="entry name" value="GluRdtase_N_sf"/>
</dbReference>
<dbReference type="InterPro" id="IPR036291">
    <property type="entry name" value="NAD(P)-bd_dom_sf"/>
</dbReference>
<dbReference type="InterPro" id="IPR006151">
    <property type="entry name" value="Shikm_DH/Glu-tRNA_Rdtase"/>
</dbReference>
<dbReference type="NCBIfam" id="TIGR01035">
    <property type="entry name" value="hemA"/>
    <property type="match status" value="1"/>
</dbReference>
<dbReference type="PANTHER" id="PTHR43013">
    <property type="entry name" value="GLUTAMYL-TRNA REDUCTASE"/>
    <property type="match status" value="1"/>
</dbReference>
<dbReference type="PANTHER" id="PTHR43013:SF1">
    <property type="entry name" value="GLUTAMYL-TRNA REDUCTASE"/>
    <property type="match status" value="1"/>
</dbReference>
<dbReference type="Pfam" id="PF00745">
    <property type="entry name" value="GlutR_dimer"/>
    <property type="match status" value="1"/>
</dbReference>
<dbReference type="Pfam" id="PF05201">
    <property type="entry name" value="GlutR_N"/>
    <property type="match status" value="1"/>
</dbReference>
<dbReference type="Pfam" id="PF01488">
    <property type="entry name" value="Shikimate_DH"/>
    <property type="match status" value="1"/>
</dbReference>
<dbReference type="PIRSF" id="PIRSF000445">
    <property type="entry name" value="4pyrrol_synth_GluRdtase"/>
    <property type="match status" value="1"/>
</dbReference>
<dbReference type="SUPFAM" id="SSF69742">
    <property type="entry name" value="Glutamyl tRNA-reductase catalytic, N-terminal domain"/>
    <property type="match status" value="1"/>
</dbReference>
<dbReference type="SUPFAM" id="SSF69075">
    <property type="entry name" value="Glutamyl tRNA-reductase dimerization domain"/>
    <property type="match status" value="1"/>
</dbReference>
<dbReference type="SUPFAM" id="SSF51735">
    <property type="entry name" value="NAD(P)-binding Rossmann-fold domains"/>
    <property type="match status" value="1"/>
</dbReference>
<dbReference type="PROSITE" id="PS00747">
    <property type="entry name" value="GLUTR"/>
    <property type="match status" value="1"/>
</dbReference>
<gene>
    <name evidence="1" type="primary">hemA</name>
    <name type="ordered locus">MmarC5_1588</name>
</gene>
<evidence type="ECO:0000255" key="1">
    <source>
        <dbReference type="HAMAP-Rule" id="MF_00087"/>
    </source>
</evidence>
<feature type="chain" id="PRO_1000004639" description="Glutamyl-tRNA reductase">
    <location>
        <begin position="1"/>
        <end position="382"/>
    </location>
</feature>
<feature type="active site" description="Nucleophile" evidence="1">
    <location>
        <position position="39"/>
    </location>
</feature>
<feature type="binding site" evidence="1">
    <location>
        <begin position="38"/>
        <end position="41"/>
    </location>
    <ligand>
        <name>substrate</name>
    </ligand>
</feature>
<feature type="binding site" evidence="1">
    <location>
        <position position="85"/>
    </location>
    <ligand>
        <name>substrate</name>
    </ligand>
</feature>
<feature type="binding site" evidence="1">
    <location>
        <begin position="90"/>
        <end position="92"/>
    </location>
    <ligand>
        <name>substrate</name>
    </ligand>
</feature>
<feature type="binding site" evidence="1">
    <location>
        <position position="96"/>
    </location>
    <ligand>
        <name>substrate</name>
    </ligand>
</feature>
<feature type="binding site" evidence="1">
    <location>
        <begin position="164"/>
        <end position="169"/>
    </location>
    <ligand>
        <name>NADP(+)</name>
        <dbReference type="ChEBI" id="CHEBI:58349"/>
    </ligand>
</feature>
<feature type="site" description="Important for activity" evidence="1">
    <location>
        <position position="75"/>
    </location>
</feature>
<accession>A4G0A1</accession>
<organism>
    <name type="scientific">Methanococcus maripaludis (strain C5 / ATCC BAA-1333)</name>
    <dbReference type="NCBI Taxonomy" id="402880"/>
    <lineage>
        <taxon>Archaea</taxon>
        <taxon>Methanobacteriati</taxon>
        <taxon>Methanobacteriota</taxon>
        <taxon>Methanomada group</taxon>
        <taxon>Methanococci</taxon>
        <taxon>Methanococcales</taxon>
        <taxon>Methanococcaceae</taxon>
        <taxon>Methanococcus</taxon>
    </lineage>
</organism>